<dbReference type="EC" id="7.1.1.2"/>
<dbReference type="EMBL" id="AM181034">
    <property type="protein sequence ID" value="CAJ57113.1"/>
    <property type="molecule type" value="Genomic_DNA"/>
</dbReference>
<dbReference type="EMBL" id="AM181035">
    <property type="protein sequence ID" value="CAJ57126.1"/>
    <property type="molecule type" value="Genomic_DNA"/>
</dbReference>
<dbReference type="RefSeq" id="YP_778911.1">
    <property type="nucleotide sequence ID" value="NC_008432.1"/>
</dbReference>
<dbReference type="SMR" id="Q08GY5"/>
<dbReference type="GeneID" id="4355951"/>
<dbReference type="CTD" id="4539"/>
<dbReference type="GO" id="GO:0005743">
    <property type="term" value="C:mitochondrial inner membrane"/>
    <property type="evidence" value="ECO:0000250"/>
    <property type="project" value="UniProtKB"/>
</dbReference>
<dbReference type="GO" id="GO:0045271">
    <property type="term" value="C:respiratory chain complex I"/>
    <property type="evidence" value="ECO:0000250"/>
    <property type="project" value="UniProtKB"/>
</dbReference>
<dbReference type="GO" id="GO:0008137">
    <property type="term" value="F:NADH dehydrogenase (ubiquinone) activity"/>
    <property type="evidence" value="ECO:0000250"/>
    <property type="project" value="UniProtKB"/>
</dbReference>
<dbReference type="GO" id="GO:0042773">
    <property type="term" value="P:ATP synthesis coupled electron transport"/>
    <property type="evidence" value="ECO:0007669"/>
    <property type="project" value="InterPro"/>
</dbReference>
<dbReference type="FunFam" id="1.10.287.3510:FF:000002">
    <property type="entry name" value="NADH-ubiquinone oxidoreductase chain 4L"/>
    <property type="match status" value="1"/>
</dbReference>
<dbReference type="Gene3D" id="1.10.287.3510">
    <property type="match status" value="1"/>
</dbReference>
<dbReference type="InterPro" id="IPR001133">
    <property type="entry name" value="NADH_UbQ_OxRdtase_chain4L/K"/>
</dbReference>
<dbReference type="InterPro" id="IPR039428">
    <property type="entry name" value="NUOK/Mnh_C1-like"/>
</dbReference>
<dbReference type="PANTHER" id="PTHR11434:SF0">
    <property type="entry name" value="NADH-UBIQUINONE OXIDOREDUCTASE CHAIN 4L"/>
    <property type="match status" value="1"/>
</dbReference>
<dbReference type="PANTHER" id="PTHR11434">
    <property type="entry name" value="NADH-UBIQUINONE OXIDOREDUCTASE SUBUNIT ND4L"/>
    <property type="match status" value="1"/>
</dbReference>
<dbReference type="Pfam" id="PF00420">
    <property type="entry name" value="Oxidored_q2"/>
    <property type="match status" value="1"/>
</dbReference>
<geneLocation type="mitochondrion"/>
<accession>Q08GY5</accession>
<accession>Q08GX2</accession>
<protein>
    <recommendedName>
        <fullName>NADH-ubiquinone oxidoreductase chain 4L</fullName>
        <ecNumber>7.1.1.2</ecNumber>
    </recommendedName>
    <alternativeName>
        <fullName>NADH dehydrogenase subunit 4L</fullName>
    </alternativeName>
</protein>
<organism>
    <name type="scientific">Pusa sibirica</name>
    <name type="common">Baikal seal</name>
    <name type="synonym">Phoca sibirica</name>
    <dbReference type="NCBI Taxonomy" id="9719"/>
    <lineage>
        <taxon>Eukaryota</taxon>
        <taxon>Metazoa</taxon>
        <taxon>Chordata</taxon>
        <taxon>Craniata</taxon>
        <taxon>Vertebrata</taxon>
        <taxon>Euteleostomi</taxon>
        <taxon>Mammalia</taxon>
        <taxon>Eutheria</taxon>
        <taxon>Laurasiatheria</taxon>
        <taxon>Carnivora</taxon>
        <taxon>Caniformia</taxon>
        <taxon>Pinnipedia</taxon>
        <taxon>Phocidae</taxon>
        <taxon>Phocinae</taxon>
        <taxon>Pusa</taxon>
    </lineage>
</organism>
<proteinExistence type="inferred from homology"/>
<name>NU4LM_PUSSI</name>
<sequence>MSMVYANIFLAFIMSLMGLLMYRSHLMSSLLCLEGMMLSLFVMMTVTILNNHFTLASMAPIILLVFAACEAALGLSLLVMVSNTYGTDYVQNLNLLQC</sequence>
<reference key="1">
    <citation type="journal article" date="2006" name="Mol. Phylogenet. Evol.">
        <title>Pinniped phylogeny and a new hypothesis for their origin and dispersal.</title>
        <authorList>
            <person name="Arnason U."/>
            <person name="Gullberg A."/>
            <person name="Janke A."/>
            <person name="Kullberg M."/>
            <person name="Lehman N."/>
            <person name="Petrov E.A."/>
            <person name="Vainola R."/>
        </authorList>
    </citation>
    <scope>NUCLEOTIDE SEQUENCE [GENOMIC DNA]</scope>
</reference>
<keyword id="KW-0249">Electron transport</keyword>
<keyword id="KW-0472">Membrane</keyword>
<keyword id="KW-0496">Mitochondrion</keyword>
<keyword id="KW-0999">Mitochondrion inner membrane</keyword>
<keyword id="KW-0520">NAD</keyword>
<keyword id="KW-0679">Respiratory chain</keyword>
<keyword id="KW-1278">Translocase</keyword>
<keyword id="KW-0812">Transmembrane</keyword>
<keyword id="KW-1133">Transmembrane helix</keyword>
<keyword id="KW-0813">Transport</keyword>
<keyword id="KW-0830">Ubiquinone</keyword>
<gene>
    <name type="primary">MT-ND4L</name>
    <name type="synonym">MTND4L</name>
    <name type="synonym">NADH4L</name>
    <name type="synonym">ND4L</name>
</gene>
<evidence type="ECO:0000250" key="1">
    <source>
        <dbReference type="UniProtKB" id="P03901"/>
    </source>
</evidence>
<evidence type="ECO:0000250" key="2">
    <source>
        <dbReference type="UniProtKB" id="P03902"/>
    </source>
</evidence>
<evidence type="ECO:0000255" key="3"/>
<evidence type="ECO:0000305" key="4"/>
<feature type="chain" id="PRO_0000275098" description="NADH-ubiquinone oxidoreductase chain 4L">
    <location>
        <begin position="1"/>
        <end position="98"/>
    </location>
</feature>
<feature type="transmembrane region" description="Helical" evidence="3">
    <location>
        <begin position="1"/>
        <end position="21"/>
    </location>
</feature>
<feature type="transmembrane region" description="Helical" evidence="3">
    <location>
        <begin position="29"/>
        <end position="49"/>
    </location>
</feature>
<feature type="transmembrane region" description="Helical" evidence="3">
    <location>
        <begin position="61"/>
        <end position="81"/>
    </location>
</feature>
<feature type="sequence variant">
    <original>M</original>
    <variation>T</variation>
    <location>
        <position position="14"/>
    </location>
</feature>
<comment type="function">
    <text evidence="1">Core subunit of the mitochondrial membrane respiratory chain NADH dehydrogenase (Complex I) which catalyzes electron transfer from NADH through the respiratory chain, using ubiquinone as an electron acceptor. Part of the enzyme membrane arm which is embedded in the lipid bilayer and involved in proton translocation.</text>
</comment>
<comment type="catalytic activity">
    <reaction evidence="1">
        <text>a ubiquinone + NADH + 5 H(+)(in) = a ubiquinol + NAD(+) + 4 H(+)(out)</text>
        <dbReference type="Rhea" id="RHEA:29091"/>
        <dbReference type="Rhea" id="RHEA-COMP:9565"/>
        <dbReference type="Rhea" id="RHEA-COMP:9566"/>
        <dbReference type="ChEBI" id="CHEBI:15378"/>
        <dbReference type="ChEBI" id="CHEBI:16389"/>
        <dbReference type="ChEBI" id="CHEBI:17976"/>
        <dbReference type="ChEBI" id="CHEBI:57540"/>
        <dbReference type="ChEBI" id="CHEBI:57945"/>
        <dbReference type="EC" id="7.1.1.2"/>
    </reaction>
    <physiologicalReaction direction="left-to-right" evidence="1">
        <dbReference type="Rhea" id="RHEA:29092"/>
    </physiologicalReaction>
</comment>
<comment type="subunit">
    <text evidence="2">Core subunit of respiratory chain NADH dehydrogenase (Complex I) which is composed of 45 different subunits.</text>
</comment>
<comment type="subcellular location">
    <subcellularLocation>
        <location evidence="2">Mitochondrion inner membrane</location>
        <topology evidence="3">Multi-pass membrane protein</topology>
    </subcellularLocation>
</comment>
<comment type="similarity">
    <text evidence="4">Belongs to the complex I subunit 4L family.</text>
</comment>